<comment type="function">
    <text evidence="1">Mitochondrial transporter that imports/exports pyrimidine nucleotides into and from mitochondria. Selectively transports cytosine, guanosine, inosine and uridine (deoxy)nucleoside mono-, di-, and triphosphates by antiport mechanism. Catalyzes uniport at much lower rate (By similarity). May import (deoxy)nucleoside triphosphates in exchange for intramitochondrial (deoxy)nucleoside mono- and diphosphates, thus providing precursors necessary for de novo synthesis of mitochondrial DNA and RNA while exporting products of their catabolism (By similarity). Participates in mitochondrial genome maintenance, regulation of mitochondrial membrane potential and mitochondrial respiration (By similarity).</text>
</comment>
<comment type="catalytic activity">
    <reaction evidence="1">
        <text>UTP(in) + CTP(out) = UTP(out) + CTP(in)</text>
        <dbReference type="Rhea" id="RHEA:73531"/>
        <dbReference type="ChEBI" id="CHEBI:37563"/>
        <dbReference type="ChEBI" id="CHEBI:46398"/>
    </reaction>
</comment>
<comment type="catalytic activity">
    <reaction evidence="1">
        <text>CTP(out) + UDP(in) = CTP(in) + UDP(out)</text>
        <dbReference type="Rhea" id="RHEA:73583"/>
        <dbReference type="ChEBI" id="CHEBI:37563"/>
        <dbReference type="ChEBI" id="CHEBI:58223"/>
    </reaction>
</comment>
<comment type="catalytic activity">
    <reaction evidence="1">
        <text>UMP(in) + CTP(out) = UMP(out) + CTP(in)</text>
        <dbReference type="Rhea" id="RHEA:73587"/>
        <dbReference type="ChEBI" id="CHEBI:37563"/>
        <dbReference type="ChEBI" id="CHEBI:57865"/>
    </reaction>
</comment>
<comment type="catalytic activity">
    <reaction evidence="1">
        <text>dUTP(in) + CTP(out) = dUTP(out) + CTP(in)</text>
        <dbReference type="Rhea" id="RHEA:73591"/>
        <dbReference type="ChEBI" id="CHEBI:37563"/>
        <dbReference type="ChEBI" id="CHEBI:61555"/>
    </reaction>
</comment>
<comment type="catalytic activity">
    <reaction evidence="1">
        <text>dUMP(in) + CTP(out) = dUMP(out) + CTP(in)</text>
        <dbReference type="Rhea" id="RHEA:73595"/>
        <dbReference type="ChEBI" id="CHEBI:37563"/>
        <dbReference type="ChEBI" id="CHEBI:246422"/>
    </reaction>
</comment>
<comment type="catalytic activity">
    <reaction evidence="1">
        <text>CDP(in) + CTP(out) = CDP(out) + CTP(in)</text>
        <dbReference type="Rhea" id="RHEA:73599"/>
        <dbReference type="ChEBI" id="CHEBI:37563"/>
        <dbReference type="ChEBI" id="CHEBI:58069"/>
    </reaction>
</comment>
<comment type="catalytic activity">
    <reaction evidence="1">
        <text>CTP(out) + CMP(in) = CTP(in) + CMP(out)</text>
        <dbReference type="Rhea" id="RHEA:73603"/>
        <dbReference type="ChEBI" id="CHEBI:37563"/>
        <dbReference type="ChEBI" id="CHEBI:60377"/>
    </reaction>
</comment>
<comment type="catalytic activity">
    <reaction evidence="1">
        <text>dCTP(in) + CTP(out) = dCTP(out) + CTP(in)</text>
        <dbReference type="Rhea" id="RHEA:73607"/>
        <dbReference type="ChEBI" id="CHEBI:37563"/>
        <dbReference type="ChEBI" id="CHEBI:61481"/>
    </reaction>
</comment>
<comment type="catalytic activity">
    <reaction evidence="1">
        <text>dCDP(in) + CTP(out) = dCDP(out) + CTP(in)</text>
        <dbReference type="Rhea" id="RHEA:73611"/>
        <dbReference type="ChEBI" id="CHEBI:37563"/>
        <dbReference type="ChEBI" id="CHEBI:58593"/>
    </reaction>
</comment>
<comment type="catalytic activity">
    <reaction evidence="1">
        <text>dCMP(in) + CTP(out) = dCMP(out) + CTP(in)</text>
        <dbReference type="Rhea" id="RHEA:73615"/>
        <dbReference type="ChEBI" id="CHEBI:37563"/>
        <dbReference type="ChEBI" id="CHEBI:57566"/>
    </reaction>
</comment>
<comment type="catalytic activity">
    <reaction evidence="1">
        <text>GTP(in) + CTP(out) = GTP(out) + CTP(in)</text>
        <dbReference type="Rhea" id="RHEA:73619"/>
        <dbReference type="ChEBI" id="CHEBI:37563"/>
        <dbReference type="ChEBI" id="CHEBI:37565"/>
    </reaction>
</comment>
<comment type="catalytic activity">
    <reaction evidence="1">
        <text>CTP(out) + GDP(in) = CTP(in) + GDP(out)</text>
        <dbReference type="Rhea" id="RHEA:73623"/>
        <dbReference type="ChEBI" id="CHEBI:37563"/>
        <dbReference type="ChEBI" id="CHEBI:58189"/>
    </reaction>
</comment>
<comment type="catalytic activity">
    <reaction evidence="1">
        <text>GMP(in) + CTP(out) = GMP(out) + CTP(in)</text>
        <dbReference type="Rhea" id="RHEA:73627"/>
        <dbReference type="ChEBI" id="CHEBI:37563"/>
        <dbReference type="ChEBI" id="CHEBI:58115"/>
    </reaction>
</comment>
<comment type="catalytic activity">
    <reaction evidence="1">
        <text>dGTP(in) + CTP(out) = dGTP(out) + CTP(in)</text>
        <dbReference type="Rhea" id="RHEA:73631"/>
        <dbReference type="ChEBI" id="CHEBI:37563"/>
        <dbReference type="ChEBI" id="CHEBI:61429"/>
    </reaction>
</comment>
<comment type="catalytic activity">
    <reaction evidence="1">
        <text>dGMP(in) + CTP(out) = dGMP(out) + CTP(in)</text>
        <dbReference type="Rhea" id="RHEA:73635"/>
        <dbReference type="ChEBI" id="CHEBI:37563"/>
        <dbReference type="ChEBI" id="CHEBI:57673"/>
    </reaction>
</comment>
<comment type="catalytic activity">
    <reaction evidence="1">
        <text>ITP(in) + CTP(out) = ITP(out) + CTP(in)</text>
        <dbReference type="Rhea" id="RHEA:73639"/>
        <dbReference type="ChEBI" id="CHEBI:37563"/>
        <dbReference type="ChEBI" id="CHEBI:61402"/>
    </reaction>
</comment>
<comment type="catalytic activity">
    <reaction evidence="1">
        <text>IDP(in) + CTP(out) = IDP(out) + CTP(in)</text>
        <dbReference type="Rhea" id="RHEA:73643"/>
        <dbReference type="ChEBI" id="CHEBI:37563"/>
        <dbReference type="ChEBI" id="CHEBI:58280"/>
    </reaction>
</comment>
<comment type="catalytic activity">
    <reaction evidence="1">
        <text>IMP(in) + CTP(out) = IMP(out) + CTP(in)</text>
        <dbReference type="Rhea" id="RHEA:73647"/>
        <dbReference type="ChEBI" id="CHEBI:37563"/>
        <dbReference type="ChEBI" id="CHEBI:58053"/>
    </reaction>
</comment>
<comment type="catalytic activity">
    <reaction evidence="1">
        <text>CTP(out) = CTP(in)</text>
        <dbReference type="Rhea" id="RHEA:73651"/>
        <dbReference type="ChEBI" id="CHEBI:37563"/>
    </reaction>
</comment>
<comment type="subcellular location">
    <subcellularLocation>
        <location evidence="1">Mitochondrion inner membrane</location>
        <topology evidence="2">Multi-pass membrane protein</topology>
    </subcellularLocation>
</comment>
<comment type="similarity">
    <text evidence="3">Belongs to the mitochondrial carrier (TC 2.A.29) family.</text>
</comment>
<sequence>MSQRDTLVHLFAGGCGGTVGAILTCPLEVVKTRLQSSSVTLYISEVQLNTMAGASVNRVVSPGPLHCLKAILEKEGPRSLFRGLGPNLVGVAPSRAIYFAAYSNCKEKLNGVFDPDSTQVHMASAAMAGFTAITATNPIWLIKTRLQLDARTRGEKQMGAFECVRKVYQTDGLRGFYRGMSASYAGISETVIHFVIYESIKQKLLECKTASMMETDEESVKEASDFVRMMLAAATSKTCATTIAYPHEVVRTRLREEGTKYRSFFQTLSLIVQEEGYGSLYRGLTTHLVRQIPNTAIMMATYELVVYLLNG</sequence>
<protein>
    <recommendedName>
        <fullName>Solute carrier family 25 member 36</fullName>
    </recommendedName>
</protein>
<feature type="chain" id="PRO_0000291798" description="Solute carrier family 25 member 36">
    <location>
        <begin position="1"/>
        <end position="311"/>
    </location>
</feature>
<feature type="transmembrane region" description="Helical; Name=1" evidence="2">
    <location>
        <begin position="7"/>
        <end position="27"/>
    </location>
</feature>
<feature type="transmembrane region" description="Helical; Name=2" evidence="2">
    <location>
        <begin position="41"/>
        <end position="57"/>
    </location>
</feature>
<feature type="transmembrane region" description="Helical; Name=3" evidence="2">
    <location>
        <begin position="111"/>
        <end position="131"/>
    </location>
</feature>
<feature type="transmembrane region" description="Helical; Name=4" evidence="2">
    <location>
        <begin position="180"/>
        <end position="200"/>
    </location>
</feature>
<feature type="transmembrane region" description="Helical; Name=5" evidence="2">
    <location>
        <begin position="226"/>
        <end position="246"/>
    </location>
</feature>
<feature type="transmembrane region" description="Helical; Name=6" evidence="2">
    <location>
        <begin position="291"/>
        <end position="311"/>
    </location>
</feature>
<feature type="repeat" description="Solcar 1">
    <location>
        <begin position="4"/>
        <end position="108"/>
    </location>
</feature>
<feature type="repeat" description="Solcar 2">
    <location>
        <begin position="116"/>
        <end position="203"/>
    </location>
</feature>
<feature type="repeat" description="Solcar 3">
    <location>
        <begin position="224"/>
        <end position="308"/>
    </location>
</feature>
<proteinExistence type="evidence at transcript level"/>
<evidence type="ECO:0000250" key="1">
    <source>
        <dbReference type="UniProtKB" id="Q96CQ1"/>
    </source>
</evidence>
<evidence type="ECO:0000255" key="2"/>
<evidence type="ECO:0000305" key="3"/>
<dbReference type="EMBL" id="AK042075">
    <property type="protein sequence ID" value="BAE20619.1"/>
    <property type="molecule type" value="mRNA"/>
</dbReference>
<dbReference type="EMBL" id="AK053646">
    <property type="protein sequence ID" value="BAC35461.1"/>
    <property type="molecule type" value="mRNA"/>
</dbReference>
<dbReference type="EMBL" id="AK078779">
    <property type="protein sequence ID" value="BAC37391.1"/>
    <property type="molecule type" value="mRNA"/>
</dbReference>
<dbReference type="EMBL" id="BC008171">
    <property type="protein sequence ID" value="AAH08171.1"/>
    <property type="molecule type" value="mRNA"/>
</dbReference>
<dbReference type="CCDS" id="CCDS23420.1"/>
<dbReference type="RefSeq" id="NP_620095.1">
    <property type="nucleotide sequence ID" value="NM_138756.4"/>
</dbReference>
<dbReference type="SMR" id="Q922G0"/>
<dbReference type="BioGRID" id="228686">
    <property type="interactions" value="2"/>
</dbReference>
<dbReference type="FunCoup" id="Q922G0">
    <property type="interactions" value="4267"/>
</dbReference>
<dbReference type="STRING" id="10090.ENSMUSP00000082302"/>
<dbReference type="iPTMnet" id="Q922G0"/>
<dbReference type="PhosphoSitePlus" id="Q922G0"/>
<dbReference type="SwissPalm" id="Q922G0"/>
<dbReference type="PaxDb" id="10090-ENSMUSP00000082302"/>
<dbReference type="PeptideAtlas" id="Q922G0"/>
<dbReference type="ProteomicsDB" id="253374"/>
<dbReference type="Antibodypedia" id="18006">
    <property type="antibodies" value="68 antibodies from 15 providers"/>
</dbReference>
<dbReference type="DNASU" id="192287"/>
<dbReference type="Ensembl" id="ENSMUST00000085206.11">
    <property type="protein sequence ID" value="ENSMUSP00000082302.5"/>
    <property type="gene ID" value="ENSMUSG00000032449.14"/>
</dbReference>
<dbReference type="GeneID" id="192287"/>
<dbReference type="KEGG" id="mmu:192287"/>
<dbReference type="UCSC" id="uc009rdb.1">
    <property type="organism name" value="mouse"/>
</dbReference>
<dbReference type="AGR" id="MGI:1924909"/>
<dbReference type="CTD" id="55186"/>
<dbReference type="MGI" id="MGI:1924909">
    <property type="gene designation" value="Slc25a36"/>
</dbReference>
<dbReference type="VEuPathDB" id="HostDB:ENSMUSG00000032449"/>
<dbReference type="eggNOG" id="KOG0757">
    <property type="taxonomic scope" value="Eukaryota"/>
</dbReference>
<dbReference type="GeneTree" id="ENSGT00940000154369"/>
<dbReference type="HOGENOM" id="CLU_015166_6_0_1"/>
<dbReference type="InParanoid" id="Q922G0"/>
<dbReference type="OMA" id="WVMYEQM"/>
<dbReference type="OrthoDB" id="269120at2759"/>
<dbReference type="PhylomeDB" id="Q922G0"/>
<dbReference type="TreeFam" id="TF314220"/>
<dbReference type="BioGRID-ORCS" id="192287">
    <property type="hits" value="2 hits in 76 CRISPR screens"/>
</dbReference>
<dbReference type="ChiTaRS" id="Slc25a36">
    <property type="organism name" value="mouse"/>
</dbReference>
<dbReference type="PRO" id="PR:Q922G0"/>
<dbReference type="Proteomes" id="UP000000589">
    <property type="component" value="Chromosome 9"/>
</dbReference>
<dbReference type="RNAct" id="Q922G0">
    <property type="molecule type" value="protein"/>
</dbReference>
<dbReference type="Bgee" id="ENSMUSG00000032449">
    <property type="expression patterns" value="Expressed in metanephric cortical collecting duct and 258 other cell types or tissues"/>
</dbReference>
<dbReference type="ExpressionAtlas" id="Q922G0">
    <property type="expression patterns" value="baseline and differential"/>
</dbReference>
<dbReference type="GO" id="GO:0005743">
    <property type="term" value="C:mitochondrial inner membrane"/>
    <property type="evidence" value="ECO:0007669"/>
    <property type="project" value="UniProtKB-SubCell"/>
</dbReference>
<dbReference type="GO" id="GO:0005739">
    <property type="term" value="C:mitochondrion"/>
    <property type="evidence" value="ECO:0007005"/>
    <property type="project" value="MGI"/>
</dbReference>
<dbReference type="GO" id="GO:0015218">
    <property type="term" value="F:pyrimidine nucleotide transmembrane transporter activity"/>
    <property type="evidence" value="ECO:0000250"/>
    <property type="project" value="UniProtKB"/>
</dbReference>
<dbReference type="GO" id="GO:0000002">
    <property type="term" value="P:mitochondrial genome maintenance"/>
    <property type="evidence" value="ECO:0000250"/>
    <property type="project" value="UniProtKB"/>
</dbReference>
<dbReference type="GO" id="GO:0007005">
    <property type="term" value="P:mitochondrion organization"/>
    <property type="evidence" value="ECO:0000250"/>
    <property type="project" value="UniProtKB"/>
</dbReference>
<dbReference type="GO" id="GO:0006864">
    <property type="term" value="P:pyrimidine nucleotide transport"/>
    <property type="evidence" value="ECO:0000250"/>
    <property type="project" value="UniProtKB"/>
</dbReference>
<dbReference type="GO" id="GO:0051881">
    <property type="term" value="P:regulation of mitochondrial membrane potential"/>
    <property type="evidence" value="ECO:0000250"/>
    <property type="project" value="UniProtKB"/>
</dbReference>
<dbReference type="FunFam" id="1.50.40.10:FF:000015">
    <property type="entry name" value="Solute carrier family 25 member 36"/>
    <property type="match status" value="1"/>
</dbReference>
<dbReference type="Gene3D" id="1.50.40.10">
    <property type="entry name" value="Mitochondrial carrier domain"/>
    <property type="match status" value="2"/>
</dbReference>
<dbReference type="InterPro" id="IPR002067">
    <property type="entry name" value="Mit_carrier"/>
</dbReference>
<dbReference type="InterPro" id="IPR018108">
    <property type="entry name" value="Mitochondrial_sb/sol_carrier"/>
</dbReference>
<dbReference type="InterPro" id="IPR023395">
    <property type="entry name" value="Mt_carrier_dom_sf"/>
</dbReference>
<dbReference type="InterPro" id="IPR049562">
    <property type="entry name" value="SLC25A33/36-like"/>
</dbReference>
<dbReference type="PANTHER" id="PTHR45829">
    <property type="entry name" value="MITOCHONDRIAL CARRIER PROTEIN RIM2"/>
    <property type="match status" value="1"/>
</dbReference>
<dbReference type="PANTHER" id="PTHR45829:SF2">
    <property type="entry name" value="SOLUTE CARRIER FAMILY 25 MEMBER 36"/>
    <property type="match status" value="1"/>
</dbReference>
<dbReference type="Pfam" id="PF00153">
    <property type="entry name" value="Mito_carr"/>
    <property type="match status" value="3"/>
</dbReference>
<dbReference type="PRINTS" id="PR00926">
    <property type="entry name" value="MITOCARRIER"/>
</dbReference>
<dbReference type="SUPFAM" id="SSF103506">
    <property type="entry name" value="Mitochondrial carrier"/>
    <property type="match status" value="1"/>
</dbReference>
<dbReference type="PROSITE" id="PS50920">
    <property type="entry name" value="SOLCAR"/>
    <property type="match status" value="3"/>
</dbReference>
<gene>
    <name type="primary">Slc25a36</name>
</gene>
<organism>
    <name type="scientific">Mus musculus</name>
    <name type="common">Mouse</name>
    <dbReference type="NCBI Taxonomy" id="10090"/>
    <lineage>
        <taxon>Eukaryota</taxon>
        <taxon>Metazoa</taxon>
        <taxon>Chordata</taxon>
        <taxon>Craniata</taxon>
        <taxon>Vertebrata</taxon>
        <taxon>Euteleostomi</taxon>
        <taxon>Mammalia</taxon>
        <taxon>Eutheria</taxon>
        <taxon>Euarchontoglires</taxon>
        <taxon>Glires</taxon>
        <taxon>Rodentia</taxon>
        <taxon>Myomorpha</taxon>
        <taxon>Muroidea</taxon>
        <taxon>Muridae</taxon>
        <taxon>Murinae</taxon>
        <taxon>Mus</taxon>
        <taxon>Mus</taxon>
    </lineage>
</organism>
<name>S2536_MOUSE</name>
<reference key="1">
    <citation type="journal article" date="2005" name="Science">
        <title>The transcriptional landscape of the mammalian genome.</title>
        <authorList>
            <person name="Carninci P."/>
            <person name="Kasukawa T."/>
            <person name="Katayama S."/>
            <person name="Gough J."/>
            <person name="Frith M.C."/>
            <person name="Maeda N."/>
            <person name="Oyama R."/>
            <person name="Ravasi T."/>
            <person name="Lenhard B."/>
            <person name="Wells C."/>
            <person name="Kodzius R."/>
            <person name="Shimokawa K."/>
            <person name="Bajic V.B."/>
            <person name="Brenner S.E."/>
            <person name="Batalov S."/>
            <person name="Forrest A.R."/>
            <person name="Zavolan M."/>
            <person name="Davis M.J."/>
            <person name="Wilming L.G."/>
            <person name="Aidinis V."/>
            <person name="Allen J.E."/>
            <person name="Ambesi-Impiombato A."/>
            <person name="Apweiler R."/>
            <person name="Aturaliya R.N."/>
            <person name="Bailey T.L."/>
            <person name="Bansal M."/>
            <person name="Baxter L."/>
            <person name="Beisel K.W."/>
            <person name="Bersano T."/>
            <person name="Bono H."/>
            <person name="Chalk A.M."/>
            <person name="Chiu K.P."/>
            <person name="Choudhary V."/>
            <person name="Christoffels A."/>
            <person name="Clutterbuck D.R."/>
            <person name="Crowe M.L."/>
            <person name="Dalla E."/>
            <person name="Dalrymple B.P."/>
            <person name="de Bono B."/>
            <person name="Della Gatta G."/>
            <person name="di Bernardo D."/>
            <person name="Down T."/>
            <person name="Engstrom P."/>
            <person name="Fagiolini M."/>
            <person name="Faulkner G."/>
            <person name="Fletcher C.F."/>
            <person name="Fukushima T."/>
            <person name="Furuno M."/>
            <person name="Futaki S."/>
            <person name="Gariboldi M."/>
            <person name="Georgii-Hemming P."/>
            <person name="Gingeras T.R."/>
            <person name="Gojobori T."/>
            <person name="Green R.E."/>
            <person name="Gustincich S."/>
            <person name="Harbers M."/>
            <person name="Hayashi Y."/>
            <person name="Hensch T.K."/>
            <person name="Hirokawa N."/>
            <person name="Hill D."/>
            <person name="Huminiecki L."/>
            <person name="Iacono M."/>
            <person name="Ikeo K."/>
            <person name="Iwama A."/>
            <person name="Ishikawa T."/>
            <person name="Jakt M."/>
            <person name="Kanapin A."/>
            <person name="Katoh M."/>
            <person name="Kawasawa Y."/>
            <person name="Kelso J."/>
            <person name="Kitamura H."/>
            <person name="Kitano H."/>
            <person name="Kollias G."/>
            <person name="Krishnan S.P."/>
            <person name="Kruger A."/>
            <person name="Kummerfeld S.K."/>
            <person name="Kurochkin I.V."/>
            <person name="Lareau L.F."/>
            <person name="Lazarevic D."/>
            <person name="Lipovich L."/>
            <person name="Liu J."/>
            <person name="Liuni S."/>
            <person name="McWilliam S."/>
            <person name="Madan Babu M."/>
            <person name="Madera M."/>
            <person name="Marchionni L."/>
            <person name="Matsuda H."/>
            <person name="Matsuzawa S."/>
            <person name="Miki H."/>
            <person name="Mignone F."/>
            <person name="Miyake S."/>
            <person name="Morris K."/>
            <person name="Mottagui-Tabar S."/>
            <person name="Mulder N."/>
            <person name="Nakano N."/>
            <person name="Nakauchi H."/>
            <person name="Ng P."/>
            <person name="Nilsson R."/>
            <person name="Nishiguchi S."/>
            <person name="Nishikawa S."/>
            <person name="Nori F."/>
            <person name="Ohara O."/>
            <person name="Okazaki Y."/>
            <person name="Orlando V."/>
            <person name="Pang K.C."/>
            <person name="Pavan W.J."/>
            <person name="Pavesi G."/>
            <person name="Pesole G."/>
            <person name="Petrovsky N."/>
            <person name="Piazza S."/>
            <person name="Reed J."/>
            <person name="Reid J.F."/>
            <person name="Ring B.Z."/>
            <person name="Ringwald M."/>
            <person name="Rost B."/>
            <person name="Ruan Y."/>
            <person name="Salzberg S.L."/>
            <person name="Sandelin A."/>
            <person name="Schneider C."/>
            <person name="Schoenbach C."/>
            <person name="Sekiguchi K."/>
            <person name="Semple C.A."/>
            <person name="Seno S."/>
            <person name="Sessa L."/>
            <person name="Sheng Y."/>
            <person name="Shibata Y."/>
            <person name="Shimada H."/>
            <person name="Shimada K."/>
            <person name="Silva D."/>
            <person name="Sinclair B."/>
            <person name="Sperling S."/>
            <person name="Stupka E."/>
            <person name="Sugiura K."/>
            <person name="Sultana R."/>
            <person name="Takenaka Y."/>
            <person name="Taki K."/>
            <person name="Tammoja K."/>
            <person name="Tan S.L."/>
            <person name="Tang S."/>
            <person name="Taylor M.S."/>
            <person name="Tegner J."/>
            <person name="Teichmann S.A."/>
            <person name="Ueda H.R."/>
            <person name="van Nimwegen E."/>
            <person name="Verardo R."/>
            <person name="Wei C.L."/>
            <person name="Yagi K."/>
            <person name="Yamanishi H."/>
            <person name="Zabarovsky E."/>
            <person name="Zhu S."/>
            <person name="Zimmer A."/>
            <person name="Hide W."/>
            <person name="Bult C."/>
            <person name="Grimmond S.M."/>
            <person name="Teasdale R.D."/>
            <person name="Liu E.T."/>
            <person name="Brusic V."/>
            <person name="Quackenbush J."/>
            <person name="Wahlestedt C."/>
            <person name="Mattick J.S."/>
            <person name="Hume D.A."/>
            <person name="Kai C."/>
            <person name="Sasaki D."/>
            <person name="Tomaru Y."/>
            <person name="Fukuda S."/>
            <person name="Kanamori-Katayama M."/>
            <person name="Suzuki M."/>
            <person name="Aoki J."/>
            <person name="Arakawa T."/>
            <person name="Iida J."/>
            <person name="Imamura K."/>
            <person name="Itoh M."/>
            <person name="Kato T."/>
            <person name="Kawaji H."/>
            <person name="Kawagashira N."/>
            <person name="Kawashima T."/>
            <person name="Kojima M."/>
            <person name="Kondo S."/>
            <person name="Konno H."/>
            <person name="Nakano K."/>
            <person name="Ninomiya N."/>
            <person name="Nishio T."/>
            <person name="Okada M."/>
            <person name="Plessy C."/>
            <person name="Shibata K."/>
            <person name="Shiraki T."/>
            <person name="Suzuki S."/>
            <person name="Tagami M."/>
            <person name="Waki K."/>
            <person name="Watahiki A."/>
            <person name="Okamura-Oho Y."/>
            <person name="Suzuki H."/>
            <person name="Kawai J."/>
            <person name="Hayashizaki Y."/>
        </authorList>
    </citation>
    <scope>NUCLEOTIDE SEQUENCE [LARGE SCALE MRNA]</scope>
    <source>
        <strain>C57BL/6J</strain>
        <tissue>Eye</tissue>
        <tissue>Testis</tissue>
        <tissue>Thymus</tissue>
    </source>
</reference>
<reference key="2">
    <citation type="journal article" date="2004" name="Genome Res.">
        <title>The status, quality, and expansion of the NIH full-length cDNA project: the Mammalian Gene Collection (MGC).</title>
        <authorList>
            <consortium name="The MGC Project Team"/>
        </authorList>
    </citation>
    <scope>NUCLEOTIDE SEQUENCE [LARGE SCALE MRNA]</scope>
    <source>
        <strain>FVB/N</strain>
        <tissue>Mammary tumor</tissue>
    </source>
</reference>
<accession>Q922G0</accession>
<keyword id="KW-0472">Membrane</keyword>
<keyword id="KW-0496">Mitochondrion</keyword>
<keyword id="KW-0999">Mitochondrion inner membrane</keyword>
<keyword id="KW-1185">Reference proteome</keyword>
<keyword id="KW-0677">Repeat</keyword>
<keyword id="KW-0812">Transmembrane</keyword>
<keyword id="KW-1133">Transmembrane helix</keyword>
<keyword id="KW-0813">Transport</keyword>